<dbReference type="EMBL" id="AE014299">
    <property type="protein sequence ID" value="AAN54355.1"/>
    <property type="molecule type" value="Genomic_DNA"/>
</dbReference>
<dbReference type="RefSeq" id="NP_716910.1">
    <property type="nucleotide sequence ID" value="NC_004347.2"/>
</dbReference>
<dbReference type="RefSeq" id="WP_006080725.1">
    <property type="nucleotide sequence ID" value="NZ_CP053946.1"/>
</dbReference>
<dbReference type="SMR" id="Q8EHD7"/>
<dbReference type="STRING" id="211586.SO_1288"/>
<dbReference type="PaxDb" id="211586-SO_1288"/>
<dbReference type="DNASU" id="1169107"/>
<dbReference type="GeneID" id="94729004"/>
<dbReference type="KEGG" id="son:SO_1288"/>
<dbReference type="PATRIC" id="fig|211586.12.peg.1234"/>
<dbReference type="eggNOG" id="COG0828">
    <property type="taxonomic scope" value="Bacteria"/>
</dbReference>
<dbReference type="HOGENOM" id="CLU_159258_1_0_6"/>
<dbReference type="OrthoDB" id="9799244at2"/>
<dbReference type="PhylomeDB" id="Q8EHD7"/>
<dbReference type="BioCyc" id="SONE211586:G1GMP-1189-MONOMER"/>
<dbReference type="PRO" id="PR:Q8EHD7"/>
<dbReference type="Proteomes" id="UP000008186">
    <property type="component" value="Chromosome"/>
</dbReference>
<dbReference type="GO" id="GO:1990904">
    <property type="term" value="C:ribonucleoprotein complex"/>
    <property type="evidence" value="ECO:0007669"/>
    <property type="project" value="UniProtKB-KW"/>
</dbReference>
<dbReference type="GO" id="GO:0005840">
    <property type="term" value="C:ribosome"/>
    <property type="evidence" value="ECO:0007669"/>
    <property type="project" value="UniProtKB-KW"/>
</dbReference>
<dbReference type="GO" id="GO:0003735">
    <property type="term" value="F:structural constituent of ribosome"/>
    <property type="evidence" value="ECO:0007669"/>
    <property type="project" value="InterPro"/>
</dbReference>
<dbReference type="GO" id="GO:0006412">
    <property type="term" value="P:translation"/>
    <property type="evidence" value="ECO:0007669"/>
    <property type="project" value="UniProtKB-UniRule"/>
</dbReference>
<dbReference type="Gene3D" id="1.20.5.1150">
    <property type="entry name" value="Ribosomal protein S8"/>
    <property type="match status" value="1"/>
</dbReference>
<dbReference type="HAMAP" id="MF_00358">
    <property type="entry name" value="Ribosomal_bS21"/>
    <property type="match status" value="1"/>
</dbReference>
<dbReference type="InterPro" id="IPR001911">
    <property type="entry name" value="Ribosomal_bS21"/>
</dbReference>
<dbReference type="InterPro" id="IPR018278">
    <property type="entry name" value="Ribosomal_bS21_CS"/>
</dbReference>
<dbReference type="InterPro" id="IPR038380">
    <property type="entry name" value="Ribosomal_bS21_sf"/>
</dbReference>
<dbReference type="NCBIfam" id="TIGR00030">
    <property type="entry name" value="S21p"/>
    <property type="match status" value="1"/>
</dbReference>
<dbReference type="PANTHER" id="PTHR21109">
    <property type="entry name" value="MITOCHONDRIAL 28S RIBOSOMAL PROTEIN S21"/>
    <property type="match status" value="1"/>
</dbReference>
<dbReference type="PANTHER" id="PTHR21109:SF22">
    <property type="entry name" value="SMALL RIBOSOMAL SUBUNIT PROTEIN BS21"/>
    <property type="match status" value="1"/>
</dbReference>
<dbReference type="Pfam" id="PF01165">
    <property type="entry name" value="Ribosomal_S21"/>
    <property type="match status" value="1"/>
</dbReference>
<dbReference type="PRINTS" id="PR00976">
    <property type="entry name" value="RIBOSOMALS21"/>
</dbReference>
<dbReference type="PROSITE" id="PS01181">
    <property type="entry name" value="RIBOSOMAL_S21"/>
    <property type="match status" value="1"/>
</dbReference>
<name>RS21_SHEON</name>
<keyword id="KW-1185">Reference proteome</keyword>
<keyword id="KW-0687">Ribonucleoprotein</keyword>
<keyword id="KW-0689">Ribosomal protein</keyword>
<organism>
    <name type="scientific">Shewanella oneidensis (strain ATCC 700550 / JCM 31522 / CIP 106686 / LMG 19005 / NCIMB 14063 / MR-1)</name>
    <dbReference type="NCBI Taxonomy" id="211586"/>
    <lineage>
        <taxon>Bacteria</taxon>
        <taxon>Pseudomonadati</taxon>
        <taxon>Pseudomonadota</taxon>
        <taxon>Gammaproteobacteria</taxon>
        <taxon>Alteromonadales</taxon>
        <taxon>Shewanellaceae</taxon>
        <taxon>Shewanella</taxon>
    </lineage>
</organism>
<protein>
    <recommendedName>
        <fullName evidence="1">Small ribosomal subunit protein bS21</fullName>
    </recommendedName>
    <alternativeName>
        <fullName evidence="2">30S ribosomal protein S21</fullName>
    </alternativeName>
</protein>
<gene>
    <name evidence="1" type="primary">rpsU</name>
    <name type="ordered locus">SO_1288</name>
</gene>
<accession>Q8EHD7</accession>
<evidence type="ECO:0000255" key="1">
    <source>
        <dbReference type="HAMAP-Rule" id="MF_00358"/>
    </source>
</evidence>
<evidence type="ECO:0000305" key="2"/>
<proteinExistence type="inferred from homology"/>
<comment type="similarity">
    <text evidence="1">Belongs to the bacterial ribosomal protein bS21 family.</text>
</comment>
<sequence>MPIIKVRENEPFDVALRRFKRSCEKAGILADVRAREFYEKPTTARKRAKAAAVKRLAKKLSRENARRVRLY</sequence>
<reference key="1">
    <citation type="journal article" date="2002" name="Nat. Biotechnol.">
        <title>Genome sequence of the dissimilatory metal ion-reducing bacterium Shewanella oneidensis.</title>
        <authorList>
            <person name="Heidelberg J.F."/>
            <person name="Paulsen I.T."/>
            <person name="Nelson K.E."/>
            <person name="Gaidos E.J."/>
            <person name="Nelson W.C."/>
            <person name="Read T.D."/>
            <person name="Eisen J.A."/>
            <person name="Seshadri R."/>
            <person name="Ward N.L."/>
            <person name="Methe B.A."/>
            <person name="Clayton R.A."/>
            <person name="Meyer T."/>
            <person name="Tsapin A."/>
            <person name="Scott J."/>
            <person name="Beanan M.J."/>
            <person name="Brinkac L.M."/>
            <person name="Daugherty S.C."/>
            <person name="DeBoy R.T."/>
            <person name="Dodson R.J."/>
            <person name="Durkin A.S."/>
            <person name="Haft D.H."/>
            <person name="Kolonay J.F."/>
            <person name="Madupu R."/>
            <person name="Peterson J.D."/>
            <person name="Umayam L.A."/>
            <person name="White O."/>
            <person name="Wolf A.M."/>
            <person name="Vamathevan J.J."/>
            <person name="Weidman J.F."/>
            <person name="Impraim M."/>
            <person name="Lee K."/>
            <person name="Berry K.J."/>
            <person name="Lee C."/>
            <person name="Mueller J."/>
            <person name="Khouri H.M."/>
            <person name="Gill J."/>
            <person name="Utterback T.R."/>
            <person name="McDonald L.A."/>
            <person name="Feldblyum T.V."/>
            <person name="Smith H.O."/>
            <person name="Venter J.C."/>
            <person name="Nealson K.H."/>
            <person name="Fraser C.M."/>
        </authorList>
    </citation>
    <scope>NUCLEOTIDE SEQUENCE [LARGE SCALE GENOMIC DNA]</scope>
    <source>
        <strain>ATCC 700550 / JCM 31522 / CIP 106686 / LMG 19005 / NCIMB 14063 / MR-1</strain>
    </source>
</reference>
<feature type="chain" id="PRO_0000266761" description="Small ribosomal subunit protein bS21">
    <location>
        <begin position="1"/>
        <end position="71"/>
    </location>
</feature>